<protein>
    <recommendedName>
        <fullName>Uncharacterized protein C11orf96</fullName>
    </recommendedName>
    <alternativeName>
        <fullName>Protein Ag2 homolog</fullName>
    </alternativeName>
</protein>
<sequence length="122" mass="13773">MAAKPGELMGICSSYQAVMPHFVCLADEFPQPVRPAKLPKGRGRLRRPRQSRFKTQPVTFDEIQEVEEEGVSPMEEEKAKKSFLQSLECLRRSTQSLSLQREQLSSCKLRNSLDSSDSDSAL</sequence>
<proteinExistence type="evidence at protein level"/>
<accession>Q7Z7L8</accession>
<accession>A0A087WW59</accession>
<comment type="subcellular location">
    <subcellularLocation>
        <location evidence="2">Cytoplasm</location>
    </subcellularLocation>
</comment>
<comment type="sequence caution" evidence="4">
    <conflict type="erroneous initiation">
        <sequence resource="EMBL-CDS" id="AAH52560"/>
    </conflict>
    <text>Extended N-terminus.</text>
</comment>
<evidence type="ECO:0000250" key="1">
    <source>
        <dbReference type="UniProtKB" id="A8IHN8"/>
    </source>
</evidence>
<evidence type="ECO:0000250" key="2">
    <source>
        <dbReference type="UniProtKB" id="C0HME0"/>
    </source>
</evidence>
<evidence type="ECO:0000250" key="3">
    <source>
        <dbReference type="UniProtKB" id="Q3UPL5"/>
    </source>
</evidence>
<evidence type="ECO:0000305" key="4"/>
<evidence type="ECO:0007744" key="5">
    <source>
    </source>
</evidence>
<evidence type="ECO:0007744" key="6">
    <source>
    </source>
</evidence>
<evidence type="ECO:0007744" key="7">
    <source>
    </source>
</evidence>
<feature type="chain" id="PRO_0000320641" description="Uncharacterized protein C11orf96">
    <location>
        <begin position="1"/>
        <end position="122"/>
    </location>
</feature>
<feature type="modified residue" description="Phosphothreonine" evidence="7">
    <location>
        <position position="55"/>
    </location>
</feature>
<feature type="modified residue" description="Phosphoserine" evidence="3">
    <location>
        <position position="72"/>
    </location>
</feature>
<feature type="modified residue" description="Phosphoserine" evidence="6">
    <location>
        <position position="86"/>
    </location>
</feature>
<feature type="modified residue" description="Phosphoserine" evidence="3">
    <location>
        <position position="96"/>
    </location>
</feature>
<feature type="modified residue" description="Phosphoserine" evidence="5 6">
    <location>
        <position position="112"/>
    </location>
</feature>
<feature type="modified residue" description="Phosphoserine" evidence="1">
    <location>
        <position position="118"/>
    </location>
</feature>
<feature type="sequence variant" id="VAR_039247" description="In dbSNP:rs2434483.">
    <original>P</original>
    <variation>S</variation>
    <location>
        <position position="39"/>
    </location>
</feature>
<feature type="sequence conflict" description="In Ref. 1; UQS36265." evidence="4" ref="1">
    <original>P</original>
    <variation>S</variation>
    <location>
        <position position="20"/>
    </location>
</feature>
<name>CK096_HUMAN</name>
<keyword id="KW-0963">Cytoplasm</keyword>
<keyword id="KW-0597">Phosphoprotein</keyword>
<keyword id="KW-1267">Proteomics identification</keyword>
<keyword id="KW-1185">Reference proteome</keyword>
<dbReference type="EMBL" id="OM643229">
    <property type="protein sequence ID" value="UQS36265.1"/>
    <property type="molecule type" value="mRNA"/>
</dbReference>
<dbReference type="EMBL" id="MK139011">
    <property type="protein sequence ID" value="QCU71486.1"/>
    <property type="molecule type" value="mRNA"/>
</dbReference>
<dbReference type="EMBL" id="AC087521">
    <property type="status" value="NOT_ANNOTATED_CDS"/>
    <property type="molecule type" value="Genomic_DNA"/>
</dbReference>
<dbReference type="EMBL" id="BC052560">
    <property type="protein sequence ID" value="AAH52560.1"/>
    <property type="status" value="ALT_INIT"/>
    <property type="molecule type" value="mRNA"/>
</dbReference>
<dbReference type="RefSeq" id="NP_001138505.1">
    <property type="nucleotide sequence ID" value="NM_001145033.1"/>
</dbReference>
<dbReference type="SMR" id="Q7Z7L8"/>
<dbReference type="BioGRID" id="132431">
    <property type="interactions" value="1"/>
</dbReference>
<dbReference type="STRING" id="9606.ENSP00000479976"/>
<dbReference type="GlyGen" id="Q7Z7L8">
    <property type="glycosylation" value="1 site, 1 O-linked glycan (1 site)"/>
</dbReference>
<dbReference type="iPTMnet" id="Q7Z7L8"/>
<dbReference type="PhosphoSitePlus" id="Q7Z7L8"/>
<dbReference type="BioMuta" id="C11orf96"/>
<dbReference type="DMDM" id="229463005"/>
<dbReference type="jPOST" id="Q7Z7L8"/>
<dbReference type="MassIVE" id="Q7Z7L8"/>
<dbReference type="PaxDb" id="9606-ENSP00000479976"/>
<dbReference type="PeptideAtlas" id="Q7Z7L8"/>
<dbReference type="ProteomicsDB" id="69563"/>
<dbReference type="Pumba" id="Q7Z7L8"/>
<dbReference type="Antibodypedia" id="50640">
    <property type="antibodies" value="7 antibodies from 6 providers"/>
</dbReference>
<dbReference type="DNASU" id="387763"/>
<dbReference type="GeneID" id="387763"/>
<dbReference type="KEGG" id="hsa:387763"/>
<dbReference type="MANE-Select" id="ENST00000617612.3">
    <property type="protein sequence ID" value="ENSP00000479976.1"/>
    <property type="RefSeq nucleotide sequence ID" value="NM_001145033.2"/>
    <property type="RefSeq protein sequence ID" value="NP_001138505.1"/>
</dbReference>
<dbReference type="UCSC" id="uc058aps.1">
    <property type="organism name" value="human"/>
</dbReference>
<dbReference type="AGR" id="HGNC:38675"/>
<dbReference type="CTD" id="387763"/>
<dbReference type="DisGeNET" id="387763"/>
<dbReference type="GeneCards" id="C11orf96"/>
<dbReference type="HGNC" id="HGNC:38675">
    <property type="gene designation" value="C11orf96"/>
</dbReference>
<dbReference type="neXtProt" id="NX_Q7Z7L8"/>
<dbReference type="PharmGKB" id="PA165543281"/>
<dbReference type="VEuPathDB" id="HostDB:ENSG00000187479"/>
<dbReference type="eggNOG" id="ENOG502S2E8">
    <property type="taxonomic scope" value="Eukaryota"/>
</dbReference>
<dbReference type="GeneTree" id="ENSGT00390000016821"/>
<dbReference type="HOGENOM" id="CLU_635451_0_0_1"/>
<dbReference type="InParanoid" id="Q7Z7L8"/>
<dbReference type="OrthoDB" id="6156669at2759"/>
<dbReference type="PAN-GO" id="Q7Z7L8">
    <property type="GO annotations" value="0 GO annotations based on evolutionary models"/>
</dbReference>
<dbReference type="PhylomeDB" id="Q7Z7L8"/>
<dbReference type="TreeFam" id="TF337679"/>
<dbReference type="PathwayCommons" id="Q7Z7L8"/>
<dbReference type="SignaLink" id="Q7Z7L8"/>
<dbReference type="BioGRID-ORCS" id="387763">
    <property type="hits" value="11 hits in 374 CRISPR screens"/>
</dbReference>
<dbReference type="ChiTaRS" id="C11orf96">
    <property type="organism name" value="human"/>
</dbReference>
<dbReference type="GenomeRNAi" id="387763"/>
<dbReference type="Pharos" id="Q7Z7L8">
    <property type="development level" value="Tdark"/>
</dbReference>
<dbReference type="PRO" id="PR:Q7Z7L8"/>
<dbReference type="Proteomes" id="UP000005640">
    <property type="component" value="Chromosome 11"/>
</dbReference>
<dbReference type="RNAct" id="Q7Z7L8">
    <property type="molecule type" value="protein"/>
</dbReference>
<dbReference type="Bgee" id="ENSG00000187479">
    <property type="expression patterns" value="Expressed in vena cava and 181 other cell types or tissues"/>
</dbReference>
<dbReference type="ExpressionAtlas" id="Q7Z7L8">
    <property type="expression patterns" value="baseline and differential"/>
</dbReference>
<dbReference type="InterPro" id="IPR031521">
    <property type="entry name" value="DUF4695"/>
</dbReference>
<dbReference type="PANTHER" id="PTHR40250">
    <property type="entry name" value="CHROMOSOME 11 OPEN READING FRAME 96"/>
    <property type="match status" value="1"/>
</dbReference>
<dbReference type="PANTHER" id="PTHR40250:SF1">
    <property type="entry name" value="SI:CH1073-281M9.1"/>
    <property type="match status" value="1"/>
</dbReference>
<dbReference type="Pfam" id="PF15766">
    <property type="entry name" value="DUF4695"/>
    <property type="match status" value="1"/>
</dbReference>
<organism>
    <name type="scientific">Homo sapiens</name>
    <name type="common">Human</name>
    <dbReference type="NCBI Taxonomy" id="9606"/>
    <lineage>
        <taxon>Eukaryota</taxon>
        <taxon>Metazoa</taxon>
        <taxon>Chordata</taxon>
        <taxon>Craniata</taxon>
        <taxon>Vertebrata</taxon>
        <taxon>Euteleostomi</taxon>
        <taxon>Mammalia</taxon>
        <taxon>Eutheria</taxon>
        <taxon>Euarchontoglires</taxon>
        <taxon>Primates</taxon>
        <taxon>Haplorrhini</taxon>
        <taxon>Catarrhini</taxon>
        <taxon>Hominidae</taxon>
        <taxon>Homo</taxon>
    </lineage>
</organism>
<reference key="1">
    <citation type="journal article" date="2022" name="BMC Vet. Res.">
        <title>Molecular cloning, characterization, and functional analysis of the uncharacterized C11orf96 gene.</title>
        <authorList>
            <person name="Yang H."/>
            <person name="Zhu J."/>
            <person name="Guo H."/>
            <person name="Tang A."/>
            <person name="Chen S."/>
            <person name="Zhang D."/>
            <person name="Yuan L."/>
            <person name="Liu G."/>
        </authorList>
    </citation>
    <scope>NUCLEOTIDE SEQUENCE [MRNA]</scope>
</reference>
<reference key="2">
    <citation type="submission" date="2018-11" db="EMBL/GenBank/DDBJ databases">
        <title>Characterization of open reading frame 96 (ORF96) gene from different vertebrate species.</title>
        <authorList>
            <person name="Wan Y."/>
            <person name="Zhang Z."/>
            <person name="Zhang J."/>
            <person name="Li J."/>
            <person name="Wang Y."/>
        </authorList>
    </citation>
    <scope>NUCLEOTIDE SEQUENCE [MRNA]</scope>
</reference>
<reference key="3">
    <citation type="journal article" date="2006" name="Nature">
        <title>Human chromosome 11 DNA sequence and analysis including novel gene identification.</title>
        <authorList>
            <person name="Taylor T.D."/>
            <person name="Noguchi H."/>
            <person name="Totoki Y."/>
            <person name="Toyoda A."/>
            <person name="Kuroki Y."/>
            <person name="Dewar K."/>
            <person name="Lloyd C."/>
            <person name="Itoh T."/>
            <person name="Takeda T."/>
            <person name="Kim D.-W."/>
            <person name="She X."/>
            <person name="Barlow K.F."/>
            <person name="Bloom T."/>
            <person name="Bruford E."/>
            <person name="Chang J.L."/>
            <person name="Cuomo C.A."/>
            <person name="Eichler E."/>
            <person name="FitzGerald M.G."/>
            <person name="Jaffe D.B."/>
            <person name="LaButti K."/>
            <person name="Nicol R."/>
            <person name="Park H.-S."/>
            <person name="Seaman C."/>
            <person name="Sougnez C."/>
            <person name="Yang X."/>
            <person name="Zimmer A.R."/>
            <person name="Zody M.C."/>
            <person name="Birren B.W."/>
            <person name="Nusbaum C."/>
            <person name="Fujiyama A."/>
            <person name="Hattori M."/>
            <person name="Rogers J."/>
            <person name="Lander E.S."/>
            <person name="Sakaki Y."/>
        </authorList>
    </citation>
    <scope>NUCLEOTIDE SEQUENCE [LARGE SCALE GENOMIC DNA]</scope>
</reference>
<reference key="4">
    <citation type="journal article" date="2004" name="Genome Res.">
        <title>The status, quality, and expansion of the NIH full-length cDNA project: the Mammalian Gene Collection (MGC).</title>
        <authorList>
            <consortium name="The MGC Project Team"/>
        </authorList>
    </citation>
    <scope>NUCLEOTIDE SEQUENCE [LARGE SCALE MRNA]</scope>
    <source>
        <tissue>Salivary gland</tissue>
    </source>
</reference>
<reference key="5">
    <citation type="journal article" date="2011" name="Sci. Signal.">
        <title>System-wide temporal characterization of the proteome and phosphoproteome of human embryonic stem cell differentiation.</title>
        <authorList>
            <person name="Rigbolt K.T."/>
            <person name="Prokhorova T.A."/>
            <person name="Akimov V."/>
            <person name="Henningsen J."/>
            <person name="Johansen P.T."/>
            <person name="Kratchmarova I."/>
            <person name="Kassem M."/>
            <person name="Mann M."/>
            <person name="Olsen J.V."/>
            <person name="Blagoev B."/>
        </authorList>
    </citation>
    <scope>PHOSPHORYLATION [LARGE SCALE ANALYSIS] AT SER-112</scope>
    <scope>IDENTIFICATION BY MASS SPECTROMETRY [LARGE SCALE ANALYSIS]</scope>
</reference>
<reference key="6">
    <citation type="journal article" date="2013" name="J. Proteome Res.">
        <title>Toward a comprehensive characterization of a human cancer cell phosphoproteome.</title>
        <authorList>
            <person name="Zhou H."/>
            <person name="Di Palma S."/>
            <person name="Preisinger C."/>
            <person name="Peng M."/>
            <person name="Polat A.N."/>
            <person name="Heck A.J."/>
            <person name="Mohammed S."/>
        </authorList>
    </citation>
    <scope>PHOSPHORYLATION [LARGE SCALE ANALYSIS] AT SER-86 AND SER-112</scope>
    <scope>IDENTIFICATION BY MASS SPECTROMETRY [LARGE SCALE ANALYSIS]</scope>
    <source>
        <tissue>Erythroleukemia</tissue>
    </source>
</reference>
<reference key="7">
    <citation type="journal article" date="2014" name="J. Proteomics">
        <title>An enzyme assisted RP-RPLC approach for in-depth analysis of human liver phosphoproteome.</title>
        <authorList>
            <person name="Bian Y."/>
            <person name="Song C."/>
            <person name="Cheng K."/>
            <person name="Dong M."/>
            <person name="Wang F."/>
            <person name="Huang J."/>
            <person name="Sun D."/>
            <person name="Wang L."/>
            <person name="Ye M."/>
            <person name="Zou H."/>
        </authorList>
    </citation>
    <scope>PHOSPHORYLATION [LARGE SCALE ANALYSIS] AT THR-55</scope>
    <scope>IDENTIFICATION BY MASS SPECTROMETRY [LARGE SCALE ANALYSIS]</scope>
    <source>
        <tissue>Liver</tissue>
    </source>
</reference>
<gene>
    <name type="primary">C11orf96</name>
    <name type="synonym">AG2</name>
</gene>